<name>HEXI2_BOVIN</name>
<evidence type="ECO:0000250" key="1"/>
<evidence type="ECO:0000250" key="2">
    <source>
        <dbReference type="UniProtKB" id="Q96MH2"/>
    </source>
</evidence>
<evidence type="ECO:0000255" key="3"/>
<evidence type="ECO:0000256" key="4">
    <source>
        <dbReference type="SAM" id="MobiDB-lite"/>
    </source>
</evidence>
<evidence type="ECO:0000305" key="5"/>
<organism>
    <name type="scientific">Bos taurus</name>
    <name type="common">Bovine</name>
    <dbReference type="NCBI Taxonomy" id="9913"/>
    <lineage>
        <taxon>Eukaryota</taxon>
        <taxon>Metazoa</taxon>
        <taxon>Chordata</taxon>
        <taxon>Craniata</taxon>
        <taxon>Vertebrata</taxon>
        <taxon>Euteleostomi</taxon>
        <taxon>Mammalia</taxon>
        <taxon>Eutheria</taxon>
        <taxon>Laurasiatheria</taxon>
        <taxon>Artiodactyla</taxon>
        <taxon>Ruminantia</taxon>
        <taxon>Pecora</taxon>
        <taxon>Bovidae</taxon>
        <taxon>Bovinae</taxon>
        <taxon>Bos</taxon>
    </lineage>
</organism>
<reference key="1">
    <citation type="submission" date="2004-12" db="EMBL/GenBank/DDBJ databases">
        <title>Cloning and expression of L3 in bovine ovarian follicles.</title>
        <authorList>
            <person name="Kaneyama K."/>
            <person name="Ushizawa K."/>
            <person name="Takahashi T."/>
            <person name="Hashizume K."/>
        </authorList>
    </citation>
    <scope>NUCLEOTIDE SEQUENCE [MRNA]</scope>
    <source>
        <tissue>Ovary</tissue>
    </source>
</reference>
<gene>
    <name type="primary">HEXIM2</name>
</gene>
<feature type="chain" id="PRO_0000305266" description="Protein HEXIM2">
    <location>
        <begin position="1"/>
        <end position="287"/>
    </location>
</feature>
<feature type="region of interest" description="Disordered" evidence="4">
    <location>
        <begin position="1"/>
        <end position="212"/>
    </location>
</feature>
<feature type="region of interest" description="Interaction with P-TEFb" evidence="1">
    <location>
        <begin position="142"/>
        <end position="145"/>
    </location>
</feature>
<feature type="region of interest" description="Interaction with CCNT1, HEXIM1 and HEXIM2" evidence="1">
    <location>
        <begin position="227"/>
        <end position="287"/>
    </location>
</feature>
<feature type="region of interest" description="Disordered" evidence="4">
    <location>
        <begin position="266"/>
        <end position="287"/>
    </location>
</feature>
<feature type="coiled-coil region" evidence="3">
    <location>
        <begin position="208"/>
        <end position="278"/>
    </location>
</feature>
<feature type="compositionally biased region" description="Basic residues" evidence="4">
    <location>
        <begin position="89"/>
        <end position="105"/>
    </location>
</feature>
<feature type="compositionally biased region" description="Basic and acidic residues" evidence="4">
    <location>
        <begin position="115"/>
        <end position="134"/>
    </location>
</feature>
<feature type="compositionally biased region" description="Basic and acidic residues" evidence="4">
    <location>
        <begin position="181"/>
        <end position="212"/>
    </location>
</feature>
<feature type="compositionally biased region" description="Basic and acidic residues" evidence="4">
    <location>
        <begin position="266"/>
        <end position="280"/>
    </location>
</feature>
<feature type="modified residue" description="Phosphoserine" evidence="2">
    <location>
        <position position="31"/>
    </location>
</feature>
<feature type="modified residue" description="Phosphothreonine" evidence="2">
    <location>
        <position position="34"/>
    </location>
</feature>
<feature type="modified residue" description="Phosphothreonine" evidence="2">
    <location>
        <position position="48"/>
    </location>
</feature>
<feature type="modified residue" description="Phosphoserine" evidence="2">
    <location>
        <position position="53"/>
    </location>
</feature>
<feature type="modified residue" description="Phosphoserine" evidence="2">
    <location>
        <position position="55"/>
    </location>
</feature>
<feature type="modified residue" description="Phosphoserine" evidence="2">
    <location>
        <position position="73"/>
    </location>
</feature>
<feature type="modified residue" description="Phosphoserine" evidence="2">
    <location>
        <position position="78"/>
    </location>
</feature>
<feature type="modified residue" description="Phosphoserine" evidence="2">
    <location>
        <position position="83"/>
    </location>
</feature>
<comment type="function">
    <text evidence="2">Transcriptional regulator which functions as a general RNA polymerase II transcription inhibitor. Core component of the 7SK RNP complex: in cooperation with 7SK snRNA sequesters P-TEFb in a large inactive 7SK snRNP complex preventing RNA polymerase II phosphorylation and subsequent transcriptional elongation.</text>
</comment>
<comment type="subunit">
    <text evidence="2">Homooligomer and heterooligomer with HEXIM1; probably dimeric. Core component of the 7SK RNP complex, at least composed of 7SK RNA, LARP7, MEPCE, HEXIM1 (or HEXIM2) and P-TEFb (composed of CDK9 and CCNT1/cyclin-T1). Interacts with CCNT2.</text>
</comment>
<comment type="subcellular location">
    <subcellularLocation>
        <location evidence="2">Nucleus</location>
    </subcellularLocation>
</comment>
<comment type="domain">
    <text evidence="1">The coiled-coil domain mediates oligomerization.</text>
</comment>
<comment type="similarity">
    <text evidence="5">Belongs to the HEXIM family.</text>
</comment>
<comment type="sequence caution" evidence="5">
    <conflict type="frameshift">
        <sequence resource="EMBL-CDS" id="BAF02367"/>
    </conflict>
</comment>
<sequence length="287" mass="32804">MKDWEQKKVASPNQPPPAALEEAKISGTCGSPRTSPEPHDPGGSQPLTPRMESHSEEEDRPGAGGGLGWNGRSPRTQSLGACSAEAMLARKKHRRRPSKRKRHWRPYLELSWAEKQQRDERQSQRASRVREEMFAKGQPVAPYNTTQFLMNDRDPEEPNLVPQGASHPGSSGESEAGDSDGQGRARGEFQQKDFSEAYERYHTESLQGRSKEELVRDYLDLERRLSQAEEEMRRLRQLRGCTNWRPCYQVEELAAEVERLRTENQRLRQENEMWNREGGRRGGQPGS</sequence>
<dbReference type="EMBL" id="AB196139">
    <property type="protein sequence ID" value="BAF02367.1"/>
    <property type="status" value="ALT_FRAME"/>
    <property type="molecule type" value="mRNA"/>
</dbReference>
<dbReference type="SMR" id="Q0X0E2"/>
<dbReference type="FunCoup" id="Q0X0E2">
    <property type="interactions" value="250"/>
</dbReference>
<dbReference type="STRING" id="9913.ENSBTAP00000073035"/>
<dbReference type="PaxDb" id="9913-ENSBTAP00000034708"/>
<dbReference type="eggNOG" id="ENOG502QQP8">
    <property type="taxonomic scope" value="Eukaryota"/>
</dbReference>
<dbReference type="HOGENOM" id="CLU_066028_1_0_1"/>
<dbReference type="InParanoid" id="Q0X0E2"/>
<dbReference type="OrthoDB" id="10058500at2759"/>
<dbReference type="Proteomes" id="UP000009136">
    <property type="component" value="Unplaced"/>
</dbReference>
<dbReference type="GO" id="GO:0005737">
    <property type="term" value="C:cytoplasm"/>
    <property type="evidence" value="ECO:0000318"/>
    <property type="project" value="GO_Central"/>
</dbReference>
<dbReference type="GO" id="GO:0005654">
    <property type="term" value="C:nucleoplasm"/>
    <property type="evidence" value="ECO:0000318"/>
    <property type="project" value="GO_Central"/>
</dbReference>
<dbReference type="GO" id="GO:0097322">
    <property type="term" value="F:7SK snRNA binding"/>
    <property type="evidence" value="ECO:0000250"/>
    <property type="project" value="UniProtKB"/>
</dbReference>
<dbReference type="GO" id="GO:0004861">
    <property type="term" value="F:cyclin-dependent protein serine/threonine kinase inhibitor activity"/>
    <property type="evidence" value="ECO:0000318"/>
    <property type="project" value="GO_Central"/>
</dbReference>
<dbReference type="GO" id="GO:0000122">
    <property type="term" value="P:negative regulation of transcription by RNA polymerase II"/>
    <property type="evidence" value="ECO:0000318"/>
    <property type="project" value="GO_Central"/>
</dbReference>
<dbReference type="Gene3D" id="6.10.250.2910">
    <property type="match status" value="1"/>
</dbReference>
<dbReference type="InterPro" id="IPR024872">
    <property type="entry name" value="HEXIM"/>
</dbReference>
<dbReference type="PANTHER" id="PTHR13469">
    <property type="entry name" value="HEXAMETHYLENE BISACETAMIDE INDUCIBLE 1"/>
    <property type="match status" value="1"/>
</dbReference>
<dbReference type="PANTHER" id="PTHR13469:SF3">
    <property type="entry name" value="PROTEIN HEXIM2"/>
    <property type="match status" value="1"/>
</dbReference>
<dbReference type="Pfam" id="PF15313">
    <property type="entry name" value="HEXIM"/>
    <property type="match status" value="1"/>
</dbReference>
<dbReference type="PRINTS" id="PR02094">
    <property type="entry name" value="HEXIMFAMILY"/>
</dbReference>
<protein>
    <recommendedName>
        <fullName>Protein HEXIM2</fullName>
    </recommendedName>
</protein>
<accession>Q0X0E2</accession>
<proteinExistence type="evidence at transcript level"/>
<keyword id="KW-0175">Coiled coil</keyword>
<keyword id="KW-0539">Nucleus</keyword>
<keyword id="KW-0597">Phosphoprotein</keyword>
<keyword id="KW-1185">Reference proteome</keyword>
<keyword id="KW-0678">Repressor</keyword>
<keyword id="KW-0804">Transcription</keyword>
<keyword id="KW-0805">Transcription regulation</keyword>